<feature type="chain" id="PRO_0000251373" description="Large ribosomal subunit protein uL18">
    <location>
        <begin position="1"/>
        <end position="119"/>
    </location>
</feature>
<keyword id="KW-0687">Ribonucleoprotein</keyword>
<keyword id="KW-0689">Ribosomal protein</keyword>
<keyword id="KW-0694">RNA-binding</keyword>
<keyword id="KW-0699">rRNA-binding</keyword>
<name>RL18_STAAB</name>
<proteinExistence type="inferred from homology"/>
<dbReference type="EMBL" id="AJ938182">
    <property type="protein sequence ID" value="CAI81795.1"/>
    <property type="molecule type" value="Genomic_DNA"/>
</dbReference>
<dbReference type="RefSeq" id="WP_000623882.1">
    <property type="nucleotide sequence ID" value="NC_007622.1"/>
</dbReference>
<dbReference type="SMR" id="Q2YYL3"/>
<dbReference type="KEGG" id="sab:SAB2106c"/>
<dbReference type="HOGENOM" id="CLU_098841_0_1_9"/>
<dbReference type="GO" id="GO:0022625">
    <property type="term" value="C:cytosolic large ribosomal subunit"/>
    <property type="evidence" value="ECO:0007669"/>
    <property type="project" value="TreeGrafter"/>
</dbReference>
<dbReference type="GO" id="GO:0008097">
    <property type="term" value="F:5S rRNA binding"/>
    <property type="evidence" value="ECO:0007669"/>
    <property type="project" value="TreeGrafter"/>
</dbReference>
<dbReference type="GO" id="GO:0003735">
    <property type="term" value="F:structural constituent of ribosome"/>
    <property type="evidence" value="ECO:0007669"/>
    <property type="project" value="InterPro"/>
</dbReference>
<dbReference type="GO" id="GO:0006412">
    <property type="term" value="P:translation"/>
    <property type="evidence" value="ECO:0007669"/>
    <property type="project" value="UniProtKB-UniRule"/>
</dbReference>
<dbReference type="CDD" id="cd00432">
    <property type="entry name" value="Ribosomal_L18_L5e"/>
    <property type="match status" value="1"/>
</dbReference>
<dbReference type="FunFam" id="3.30.420.100:FF:000001">
    <property type="entry name" value="50S ribosomal protein L18"/>
    <property type="match status" value="1"/>
</dbReference>
<dbReference type="Gene3D" id="3.30.420.100">
    <property type="match status" value="1"/>
</dbReference>
<dbReference type="HAMAP" id="MF_01337_B">
    <property type="entry name" value="Ribosomal_uL18_B"/>
    <property type="match status" value="1"/>
</dbReference>
<dbReference type="InterPro" id="IPR004389">
    <property type="entry name" value="Ribosomal_uL18_bac-type"/>
</dbReference>
<dbReference type="InterPro" id="IPR005484">
    <property type="entry name" value="Ribosomal_uL18_bac/euk"/>
</dbReference>
<dbReference type="NCBIfam" id="TIGR00060">
    <property type="entry name" value="L18_bact"/>
    <property type="match status" value="1"/>
</dbReference>
<dbReference type="PANTHER" id="PTHR12899">
    <property type="entry name" value="39S RIBOSOMAL PROTEIN L18, MITOCHONDRIAL"/>
    <property type="match status" value="1"/>
</dbReference>
<dbReference type="PANTHER" id="PTHR12899:SF3">
    <property type="entry name" value="LARGE RIBOSOMAL SUBUNIT PROTEIN UL18M"/>
    <property type="match status" value="1"/>
</dbReference>
<dbReference type="Pfam" id="PF00861">
    <property type="entry name" value="Ribosomal_L18p"/>
    <property type="match status" value="1"/>
</dbReference>
<dbReference type="SUPFAM" id="SSF53137">
    <property type="entry name" value="Translational machinery components"/>
    <property type="match status" value="1"/>
</dbReference>
<organism>
    <name type="scientific">Staphylococcus aureus (strain bovine RF122 / ET3-1)</name>
    <dbReference type="NCBI Taxonomy" id="273036"/>
    <lineage>
        <taxon>Bacteria</taxon>
        <taxon>Bacillati</taxon>
        <taxon>Bacillota</taxon>
        <taxon>Bacilli</taxon>
        <taxon>Bacillales</taxon>
        <taxon>Staphylococcaceae</taxon>
        <taxon>Staphylococcus</taxon>
    </lineage>
</organism>
<protein>
    <recommendedName>
        <fullName evidence="1">Large ribosomal subunit protein uL18</fullName>
    </recommendedName>
    <alternativeName>
        <fullName evidence="2">50S ribosomal protein L18</fullName>
    </alternativeName>
</protein>
<gene>
    <name evidence="1" type="primary">rplR</name>
    <name type="ordered locus">SAB2106c</name>
</gene>
<reference key="1">
    <citation type="journal article" date="2007" name="PLoS ONE">
        <title>Molecular correlates of host specialization in Staphylococcus aureus.</title>
        <authorList>
            <person name="Herron-Olson L."/>
            <person name="Fitzgerald J.R."/>
            <person name="Musser J.M."/>
            <person name="Kapur V."/>
        </authorList>
    </citation>
    <scope>NUCLEOTIDE SEQUENCE [LARGE SCALE GENOMIC DNA]</scope>
    <source>
        <strain>bovine RF122 / ET3-1</strain>
    </source>
</reference>
<comment type="function">
    <text evidence="1">This is one of the proteins that bind and probably mediate the attachment of the 5S RNA into the large ribosomal subunit, where it forms part of the central protuberance.</text>
</comment>
<comment type="subunit">
    <text evidence="1">Part of the 50S ribosomal subunit; part of the 5S rRNA/L5/L18/L25 subcomplex. Contacts the 5S and 23S rRNAs.</text>
</comment>
<comment type="similarity">
    <text evidence="1">Belongs to the universal ribosomal protein uL18 family.</text>
</comment>
<sequence>MISKIDKNKVRLKRHARVRTNLSGTAEKPRLNVYRSNKHIYAQIIDDNKGVTLAQASSKDSDIATTATKVELATKVGEAIAKKATDKGIKEIVFDRGGYLYHGRVKALAEAARESGLEF</sequence>
<evidence type="ECO:0000255" key="1">
    <source>
        <dbReference type="HAMAP-Rule" id="MF_01337"/>
    </source>
</evidence>
<evidence type="ECO:0000305" key="2"/>
<accession>Q2YYL3</accession>